<reference key="1">
    <citation type="submission" date="2007-04" db="EMBL/GenBank/DDBJ databases">
        <title>Complete sequence of Shewanella putrefaciens CN-32.</title>
        <authorList>
            <consortium name="US DOE Joint Genome Institute"/>
            <person name="Copeland A."/>
            <person name="Lucas S."/>
            <person name="Lapidus A."/>
            <person name="Barry K."/>
            <person name="Detter J.C."/>
            <person name="Glavina del Rio T."/>
            <person name="Hammon N."/>
            <person name="Israni S."/>
            <person name="Dalin E."/>
            <person name="Tice H."/>
            <person name="Pitluck S."/>
            <person name="Chain P."/>
            <person name="Malfatti S."/>
            <person name="Shin M."/>
            <person name="Vergez L."/>
            <person name="Schmutz J."/>
            <person name="Larimer F."/>
            <person name="Land M."/>
            <person name="Hauser L."/>
            <person name="Kyrpides N."/>
            <person name="Mikhailova N."/>
            <person name="Romine M.F."/>
            <person name="Fredrickson J."/>
            <person name="Tiedje J."/>
            <person name="Richardson P."/>
        </authorList>
    </citation>
    <scope>NUCLEOTIDE SEQUENCE [LARGE SCALE GENOMIC DNA]</scope>
    <source>
        <strain>CN-32 / ATCC BAA-453</strain>
    </source>
</reference>
<keyword id="KW-0012">Acyltransferase</keyword>
<keyword id="KW-0963">Cytoplasm</keyword>
<keyword id="KW-0808">Transferase</keyword>
<name>LFTR_SHEPC</name>
<accession>A4Y7L2</accession>
<proteinExistence type="inferred from homology"/>
<comment type="function">
    <text evidence="1">Functions in the N-end rule pathway of protein degradation where it conjugates Leu, Phe and, less efficiently, Met from aminoacyl-tRNAs to the N-termini of proteins containing an N-terminal arginine or lysine.</text>
</comment>
<comment type="catalytic activity">
    <reaction evidence="1">
        <text>N-terminal L-lysyl-[protein] + L-leucyl-tRNA(Leu) = N-terminal L-leucyl-L-lysyl-[protein] + tRNA(Leu) + H(+)</text>
        <dbReference type="Rhea" id="RHEA:12340"/>
        <dbReference type="Rhea" id="RHEA-COMP:9613"/>
        <dbReference type="Rhea" id="RHEA-COMP:9622"/>
        <dbReference type="Rhea" id="RHEA-COMP:12670"/>
        <dbReference type="Rhea" id="RHEA-COMP:12671"/>
        <dbReference type="ChEBI" id="CHEBI:15378"/>
        <dbReference type="ChEBI" id="CHEBI:65249"/>
        <dbReference type="ChEBI" id="CHEBI:78442"/>
        <dbReference type="ChEBI" id="CHEBI:78494"/>
        <dbReference type="ChEBI" id="CHEBI:133043"/>
        <dbReference type="EC" id="2.3.2.6"/>
    </reaction>
</comment>
<comment type="catalytic activity">
    <reaction evidence="1">
        <text>N-terminal L-arginyl-[protein] + L-leucyl-tRNA(Leu) = N-terminal L-leucyl-L-arginyl-[protein] + tRNA(Leu) + H(+)</text>
        <dbReference type="Rhea" id="RHEA:50416"/>
        <dbReference type="Rhea" id="RHEA-COMP:9613"/>
        <dbReference type="Rhea" id="RHEA-COMP:9622"/>
        <dbReference type="Rhea" id="RHEA-COMP:12672"/>
        <dbReference type="Rhea" id="RHEA-COMP:12673"/>
        <dbReference type="ChEBI" id="CHEBI:15378"/>
        <dbReference type="ChEBI" id="CHEBI:64719"/>
        <dbReference type="ChEBI" id="CHEBI:78442"/>
        <dbReference type="ChEBI" id="CHEBI:78494"/>
        <dbReference type="ChEBI" id="CHEBI:133044"/>
        <dbReference type="EC" id="2.3.2.6"/>
    </reaction>
</comment>
<comment type="catalytic activity">
    <reaction evidence="1">
        <text>L-phenylalanyl-tRNA(Phe) + an N-terminal L-alpha-aminoacyl-[protein] = an N-terminal L-phenylalanyl-L-alpha-aminoacyl-[protein] + tRNA(Phe)</text>
        <dbReference type="Rhea" id="RHEA:43632"/>
        <dbReference type="Rhea" id="RHEA-COMP:9668"/>
        <dbReference type="Rhea" id="RHEA-COMP:9699"/>
        <dbReference type="Rhea" id="RHEA-COMP:10636"/>
        <dbReference type="Rhea" id="RHEA-COMP:10637"/>
        <dbReference type="ChEBI" id="CHEBI:78442"/>
        <dbReference type="ChEBI" id="CHEBI:78531"/>
        <dbReference type="ChEBI" id="CHEBI:78597"/>
        <dbReference type="ChEBI" id="CHEBI:83561"/>
        <dbReference type="EC" id="2.3.2.6"/>
    </reaction>
</comment>
<comment type="subcellular location">
    <subcellularLocation>
        <location evidence="1">Cytoplasm</location>
    </subcellularLocation>
</comment>
<comment type="similarity">
    <text evidence="1">Belongs to the L/F-transferase family.</text>
</comment>
<feature type="chain" id="PRO_1000045116" description="Leucyl/phenylalanyl-tRNA--protein transferase">
    <location>
        <begin position="1"/>
        <end position="236"/>
    </location>
</feature>
<protein>
    <recommendedName>
        <fullName evidence="1">Leucyl/phenylalanyl-tRNA--protein transferase</fullName>
        <ecNumber evidence="1">2.3.2.6</ecNumber>
    </recommendedName>
    <alternativeName>
        <fullName evidence="1">L/F-transferase</fullName>
    </alternativeName>
    <alternativeName>
        <fullName evidence="1">Leucyltransferase</fullName>
    </alternativeName>
    <alternativeName>
        <fullName evidence="1">Phenyalanyltransferase</fullName>
    </alternativeName>
</protein>
<gene>
    <name evidence="1" type="primary">aat</name>
    <name type="ordered locus">Sputcn32_2224</name>
</gene>
<dbReference type="EC" id="2.3.2.6" evidence="1"/>
<dbReference type="EMBL" id="CP000681">
    <property type="protein sequence ID" value="ABP75945.1"/>
    <property type="molecule type" value="Genomic_DNA"/>
</dbReference>
<dbReference type="SMR" id="A4Y7L2"/>
<dbReference type="STRING" id="319224.Sputcn32_2224"/>
<dbReference type="KEGG" id="spc:Sputcn32_2224"/>
<dbReference type="eggNOG" id="COG2360">
    <property type="taxonomic scope" value="Bacteria"/>
</dbReference>
<dbReference type="HOGENOM" id="CLU_075045_0_0_6"/>
<dbReference type="GO" id="GO:0005737">
    <property type="term" value="C:cytoplasm"/>
    <property type="evidence" value="ECO:0007669"/>
    <property type="project" value="UniProtKB-SubCell"/>
</dbReference>
<dbReference type="GO" id="GO:0008914">
    <property type="term" value="F:leucyl-tRNA--protein transferase activity"/>
    <property type="evidence" value="ECO:0007669"/>
    <property type="project" value="UniProtKB-UniRule"/>
</dbReference>
<dbReference type="GO" id="GO:0030163">
    <property type="term" value="P:protein catabolic process"/>
    <property type="evidence" value="ECO:0007669"/>
    <property type="project" value="UniProtKB-UniRule"/>
</dbReference>
<dbReference type="FunFam" id="3.30.70.3550:FF:000001">
    <property type="entry name" value="Leucyl/phenylalanyl-tRNA--protein transferase"/>
    <property type="match status" value="1"/>
</dbReference>
<dbReference type="FunFam" id="3.40.630.70:FF:000001">
    <property type="entry name" value="Leucyl/phenylalanyl-tRNA--protein transferase"/>
    <property type="match status" value="1"/>
</dbReference>
<dbReference type="Gene3D" id="3.40.630.70">
    <property type="entry name" value="Leucyl/phenylalanyl-tRNA-protein transferase, C-terminal domain"/>
    <property type="match status" value="1"/>
</dbReference>
<dbReference type="Gene3D" id="3.30.70.3550">
    <property type="entry name" value="Leucyl/phenylalanyl-tRNA-protein transferase, N-terminal domain"/>
    <property type="match status" value="1"/>
</dbReference>
<dbReference type="HAMAP" id="MF_00688">
    <property type="entry name" value="Leu_Phe_trans"/>
    <property type="match status" value="1"/>
</dbReference>
<dbReference type="InterPro" id="IPR016181">
    <property type="entry name" value="Acyl_CoA_acyltransferase"/>
</dbReference>
<dbReference type="InterPro" id="IPR004616">
    <property type="entry name" value="Leu/Phe-tRNA_Trfase"/>
</dbReference>
<dbReference type="InterPro" id="IPR042203">
    <property type="entry name" value="Leu/Phe-tRNA_Trfase_C"/>
</dbReference>
<dbReference type="InterPro" id="IPR042221">
    <property type="entry name" value="Leu/Phe-tRNA_Trfase_N"/>
</dbReference>
<dbReference type="NCBIfam" id="TIGR00667">
    <property type="entry name" value="aat"/>
    <property type="match status" value="1"/>
</dbReference>
<dbReference type="PANTHER" id="PTHR30098">
    <property type="entry name" value="LEUCYL/PHENYLALANYL-TRNA--PROTEIN TRANSFERASE"/>
    <property type="match status" value="1"/>
</dbReference>
<dbReference type="PANTHER" id="PTHR30098:SF2">
    <property type="entry name" value="LEUCYL_PHENYLALANYL-TRNA--PROTEIN TRANSFERASE"/>
    <property type="match status" value="1"/>
</dbReference>
<dbReference type="Pfam" id="PF03588">
    <property type="entry name" value="Leu_Phe_trans"/>
    <property type="match status" value="1"/>
</dbReference>
<dbReference type="SUPFAM" id="SSF55729">
    <property type="entry name" value="Acyl-CoA N-acyltransferases (Nat)"/>
    <property type="match status" value="1"/>
</dbReference>
<evidence type="ECO:0000255" key="1">
    <source>
        <dbReference type="HAMAP-Rule" id="MF_00688"/>
    </source>
</evidence>
<sequence length="236" mass="26891">MKSLSFLNHEFEAFPSPELALTDPNGLLAIGGDLRPERLLTAYYNGIFPWFNADDPILWWSPDPRAIFMLGKIRISTSLCKYLKKQPWHFTINHAFTSVMAGCAEPRPKQNGTWITDEIQMAYRELHQNGHAHSIEVWEGEQLIGGLYGLAIGQVFCGESMFHRQTNASKAAIVVLQQHLIKRGFKLIDAQVMNPHLESLGAKAIKRTHFIELLTQFRDKKVHPDAWIPSEVFLEL</sequence>
<organism>
    <name type="scientific">Shewanella putrefaciens (strain CN-32 / ATCC BAA-453)</name>
    <dbReference type="NCBI Taxonomy" id="319224"/>
    <lineage>
        <taxon>Bacteria</taxon>
        <taxon>Pseudomonadati</taxon>
        <taxon>Pseudomonadota</taxon>
        <taxon>Gammaproteobacteria</taxon>
        <taxon>Alteromonadales</taxon>
        <taxon>Shewanellaceae</taxon>
        <taxon>Shewanella</taxon>
    </lineage>
</organism>